<evidence type="ECO:0000255" key="1">
    <source>
        <dbReference type="HAMAP-Rule" id="MF_00394"/>
    </source>
</evidence>
<proteinExistence type="inferred from homology"/>
<keyword id="KW-0963">Cytoplasm</keyword>
<keyword id="KW-0444">Lipid biosynthesis</keyword>
<keyword id="KW-0443">Lipid metabolism</keyword>
<keyword id="KW-0520">NAD</keyword>
<keyword id="KW-0521">NADP</keyword>
<keyword id="KW-0547">Nucleotide-binding</keyword>
<keyword id="KW-0560">Oxidoreductase</keyword>
<keyword id="KW-0594">Phospholipid biosynthesis</keyword>
<keyword id="KW-1208">Phospholipid metabolism</keyword>
<keyword id="KW-1185">Reference proteome</keyword>
<feature type="chain" id="PRO_1000049540" description="Glycerol-3-phosphate dehydrogenase [NAD(P)+]">
    <location>
        <begin position="1"/>
        <end position="338"/>
    </location>
</feature>
<feature type="active site" description="Proton acceptor" evidence="1">
    <location>
        <position position="198"/>
    </location>
</feature>
<feature type="binding site" evidence="1">
    <location>
        <position position="11"/>
    </location>
    <ligand>
        <name>NADPH</name>
        <dbReference type="ChEBI" id="CHEBI:57783"/>
    </ligand>
</feature>
<feature type="binding site" evidence="1">
    <location>
        <position position="30"/>
    </location>
    <ligand>
        <name>NADPH</name>
        <dbReference type="ChEBI" id="CHEBI:57783"/>
    </ligand>
</feature>
<feature type="binding site" evidence="1">
    <location>
        <position position="109"/>
    </location>
    <ligand>
        <name>NADPH</name>
        <dbReference type="ChEBI" id="CHEBI:57783"/>
    </ligand>
</feature>
<feature type="binding site" evidence="1">
    <location>
        <position position="109"/>
    </location>
    <ligand>
        <name>sn-glycerol 3-phosphate</name>
        <dbReference type="ChEBI" id="CHEBI:57597"/>
    </ligand>
</feature>
<feature type="binding site" evidence="1">
    <location>
        <position position="143"/>
    </location>
    <ligand>
        <name>sn-glycerol 3-phosphate</name>
        <dbReference type="ChEBI" id="CHEBI:57597"/>
    </ligand>
</feature>
<feature type="binding site" evidence="1">
    <location>
        <position position="145"/>
    </location>
    <ligand>
        <name>sn-glycerol 3-phosphate</name>
        <dbReference type="ChEBI" id="CHEBI:57597"/>
    </ligand>
</feature>
<feature type="binding site" evidence="1">
    <location>
        <position position="147"/>
    </location>
    <ligand>
        <name>NADPH</name>
        <dbReference type="ChEBI" id="CHEBI:57783"/>
    </ligand>
</feature>
<feature type="binding site" evidence="1">
    <location>
        <position position="198"/>
    </location>
    <ligand>
        <name>sn-glycerol 3-phosphate</name>
        <dbReference type="ChEBI" id="CHEBI:57597"/>
    </ligand>
</feature>
<feature type="binding site" evidence="1">
    <location>
        <position position="251"/>
    </location>
    <ligand>
        <name>sn-glycerol 3-phosphate</name>
        <dbReference type="ChEBI" id="CHEBI:57597"/>
    </ligand>
</feature>
<feature type="binding site" evidence="1">
    <location>
        <position position="261"/>
    </location>
    <ligand>
        <name>sn-glycerol 3-phosphate</name>
        <dbReference type="ChEBI" id="CHEBI:57597"/>
    </ligand>
</feature>
<feature type="binding site" evidence="1">
    <location>
        <position position="262"/>
    </location>
    <ligand>
        <name>NADPH</name>
        <dbReference type="ChEBI" id="CHEBI:57783"/>
    </ligand>
</feature>
<feature type="binding site" evidence="1">
    <location>
        <position position="262"/>
    </location>
    <ligand>
        <name>sn-glycerol 3-phosphate</name>
        <dbReference type="ChEBI" id="CHEBI:57597"/>
    </ligand>
</feature>
<feature type="binding site" evidence="1">
    <location>
        <position position="263"/>
    </location>
    <ligand>
        <name>sn-glycerol 3-phosphate</name>
        <dbReference type="ChEBI" id="CHEBI:57597"/>
    </ligand>
</feature>
<feature type="binding site" evidence="1">
    <location>
        <position position="286"/>
    </location>
    <ligand>
        <name>NADPH</name>
        <dbReference type="ChEBI" id="CHEBI:57783"/>
    </ligand>
</feature>
<feature type="binding site" evidence="1">
    <location>
        <position position="288"/>
    </location>
    <ligand>
        <name>NADPH</name>
        <dbReference type="ChEBI" id="CHEBI:57783"/>
    </ligand>
</feature>
<organism>
    <name type="scientific">Cupriavidus necator (strain ATCC 17699 / DSM 428 / KCTC 22496 / NCIMB 10442 / H16 / Stanier 337)</name>
    <name type="common">Ralstonia eutropha</name>
    <dbReference type="NCBI Taxonomy" id="381666"/>
    <lineage>
        <taxon>Bacteria</taxon>
        <taxon>Pseudomonadati</taxon>
        <taxon>Pseudomonadota</taxon>
        <taxon>Betaproteobacteria</taxon>
        <taxon>Burkholderiales</taxon>
        <taxon>Burkholderiaceae</taxon>
        <taxon>Cupriavidus</taxon>
    </lineage>
</organism>
<comment type="function">
    <text evidence="1">Catalyzes the reduction of the glycolytic intermediate dihydroxyacetone phosphate (DHAP) to sn-glycerol 3-phosphate (G3P), the key precursor for phospholipid synthesis.</text>
</comment>
<comment type="catalytic activity">
    <reaction evidence="1">
        <text>sn-glycerol 3-phosphate + NAD(+) = dihydroxyacetone phosphate + NADH + H(+)</text>
        <dbReference type="Rhea" id="RHEA:11092"/>
        <dbReference type="ChEBI" id="CHEBI:15378"/>
        <dbReference type="ChEBI" id="CHEBI:57540"/>
        <dbReference type="ChEBI" id="CHEBI:57597"/>
        <dbReference type="ChEBI" id="CHEBI:57642"/>
        <dbReference type="ChEBI" id="CHEBI:57945"/>
        <dbReference type="EC" id="1.1.1.94"/>
    </reaction>
    <physiologicalReaction direction="right-to-left" evidence="1">
        <dbReference type="Rhea" id="RHEA:11094"/>
    </physiologicalReaction>
</comment>
<comment type="catalytic activity">
    <reaction evidence="1">
        <text>sn-glycerol 3-phosphate + NADP(+) = dihydroxyacetone phosphate + NADPH + H(+)</text>
        <dbReference type="Rhea" id="RHEA:11096"/>
        <dbReference type="ChEBI" id="CHEBI:15378"/>
        <dbReference type="ChEBI" id="CHEBI:57597"/>
        <dbReference type="ChEBI" id="CHEBI:57642"/>
        <dbReference type="ChEBI" id="CHEBI:57783"/>
        <dbReference type="ChEBI" id="CHEBI:58349"/>
        <dbReference type="EC" id="1.1.1.94"/>
    </reaction>
    <physiologicalReaction direction="right-to-left" evidence="1">
        <dbReference type="Rhea" id="RHEA:11098"/>
    </physiologicalReaction>
</comment>
<comment type="pathway">
    <text evidence="1">Membrane lipid metabolism; glycerophospholipid metabolism.</text>
</comment>
<comment type="subcellular location">
    <subcellularLocation>
        <location evidence="1">Cytoplasm</location>
    </subcellularLocation>
</comment>
<comment type="similarity">
    <text evidence="1">Belongs to the NAD-dependent glycerol-3-phosphate dehydrogenase family.</text>
</comment>
<accession>Q0KET4</accession>
<gene>
    <name evidence="1" type="primary">gpsA</name>
    <name type="ordered locus">H16_A0336</name>
</gene>
<protein>
    <recommendedName>
        <fullName evidence="1">Glycerol-3-phosphate dehydrogenase [NAD(P)+]</fullName>
        <ecNumber evidence="1">1.1.1.94</ecNumber>
    </recommendedName>
    <alternativeName>
        <fullName evidence="1">NAD(P)(+)-dependent glycerol-3-phosphate dehydrogenase</fullName>
    </alternativeName>
    <alternativeName>
        <fullName evidence="1">NAD(P)H-dependent dihydroxyacetone-phosphate reductase</fullName>
    </alternativeName>
</protein>
<name>GPDA_CUPNH</name>
<sequence length="338" mass="34688">MKLTFLGAGAWGTALASHAAAANDVVLWGRDPAQLAAIAATRENAAYLPGVTLSERLAVQADFEQAVAHAADDADGIVVVATPVAGLREMTRRLAARGARPVSMLWLCKGFESGTHLLPHQMVRAELDAAGRTEGFAYGVLTGPSFAREVALGLPCALTVAGNEPSLAERAQAAFHHHAMRIYGSDDLTGVEVGGAVKNVLAIATGASDGLGLGLNARAALVTRGLAEMTRLGLALGGRVETFMGLAGVGDLILTATGDLSRNRKVGQQLAAGQSLEQILAGLGHVAEGVRCAQAVAELASAYGVEMPIARAVCAVLFDGLSAADAVAQLLQRDARDE</sequence>
<dbReference type="EC" id="1.1.1.94" evidence="1"/>
<dbReference type="EMBL" id="AM260479">
    <property type="protein sequence ID" value="CAJ91487.1"/>
    <property type="molecule type" value="Genomic_DNA"/>
</dbReference>
<dbReference type="RefSeq" id="WP_011614462.1">
    <property type="nucleotide sequence ID" value="NC_008313.1"/>
</dbReference>
<dbReference type="SMR" id="Q0KET4"/>
<dbReference type="STRING" id="381666.H16_A0336"/>
<dbReference type="KEGG" id="reh:H16_A0336"/>
<dbReference type="PATRIC" id="fig|381666.6.peg.699"/>
<dbReference type="eggNOG" id="COG0240">
    <property type="taxonomic scope" value="Bacteria"/>
</dbReference>
<dbReference type="HOGENOM" id="CLU_033449_0_2_4"/>
<dbReference type="OrthoDB" id="9812273at2"/>
<dbReference type="UniPathway" id="UPA00940"/>
<dbReference type="Proteomes" id="UP000008210">
    <property type="component" value="Chromosome 1"/>
</dbReference>
<dbReference type="GO" id="GO:0005829">
    <property type="term" value="C:cytosol"/>
    <property type="evidence" value="ECO:0007669"/>
    <property type="project" value="TreeGrafter"/>
</dbReference>
<dbReference type="GO" id="GO:0047952">
    <property type="term" value="F:glycerol-3-phosphate dehydrogenase [NAD(P)+] activity"/>
    <property type="evidence" value="ECO:0007669"/>
    <property type="project" value="UniProtKB-UniRule"/>
</dbReference>
<dbReference type="GO" id="GO:0051287">
    <property type="term" value="F:NAD binding"/>
    <property type="evidence" value="ECO:0007669"/>
    <property type="project" value="InterPro"/>
</dbReference>
<dbReference type="GO" id="GO:0005975">
    <property type="term" value="P:carbohydrate metabolic process"/>
    <property type="evidence" value="ECO:0007669"/>
    <property type="project" value="InterPro"/>
</dbReference>
<dbReference type="GO" id="GO:0046167">
    <property type="term" value="P:glycerol-3-phosphate biosynthetic process"/>
    <property type="evidence" value="ECO:0007669"/>
    <property type="project" value="UniProtKB-UniRule"/>
</dbReference>
<dbReference type="GO" id="GO:0046168">
    <property type="term" value="P:glycerol-3-phosphate catabolic process"/>
    <property type="evidence" value="ECO:0007669"/>
    <property type="project" value="InterPro"/>
</dbReference>
<dbReference type="GO" id="GO:0006650">
    <property type="term" value="P:glycerophospholipid metabolic process"/>
    <property type="evidence" value="ECO:0007669"/>
    <property type="project" value="UniProtKB-UniRule"/>
</dbReference>
<dbReference type="GO" id="GO:0008654">
    <property type="term" value="P:phospholipid biosynthetic process"/>
    <property type="evidence" value="ECO:0007669"/>
    <property type="project" value="UniProtKB-KW"/>
</dbReference>
<dbReference type="FunFam" id="1.10.1040.10:FF:000001">
    <property type="entry name" value="Glycerol-3-phosphate dehydrogenase [NAD(P)+]"/>
    <property type="match status" value="1"/>
</dbReference>
<dbReference type="FunFam" id="3.40.50.720:FF:000019">
    <property type="entry name" value="Glycerol-3-phosphate dehydrogenase [NAD(P)+]"/>
    <property type="match status" value="1"/>
</dbReference>
<dbReference type="Gene3D" id="1.10.1040.10">
    <property type="entry name" value="N-(1-d-carboxylethyl)-l-norvaline Dehydrogenase, domain 2"/>
    <property type="match status" value="1"/>
</dbReference>
<dbReference type="Gene3D" id="3.40.50.720">
    <property type="entry name" value="NAD(P)-binding Rossmann-like Domain"/>
    <property type="match status" value="1"/>
</dbReference>
<dbReference type="HAMAP" id="MF_00394">
    <property type="entry name" value="NAD_Glyc3P_dehydrog"/>
    <property type="match status" value="1"/>
</dbReference>
<dbReference type="InterPro" id="IPR008927">
    <property type="entry name" value="6-PGluconate_DH-like_C_sf"/>
</dbReference>
<dbReference type="InterPro" id="IPR013328">
    <property type="entry name" value="6PGD_dom2"/>
</dbReference>
<dbReference type="InterPro" id="IPR006168">
    <property type="entry name" value="G3P_DH_NAD-dep"/>
</dbReference>
<dbReference type="InterPro" id="IPR006109">
    <property type="entry name" value="G3P_DH_NAD-dep_C"/>
</dbReference>
<dbReference type="InterPro" id="IPR011128">
    <property type="entry name" value="G3P_DH_NAD-dep_N"/>
</dbReference>
<dbReference type="InterPro" id="IPR036291">
    <property type="entry name" value="NAD(P)-bd_dom_sf"/>
</dbReference>
<dbReference type="NCBIfam" id="NF000940">
    <property type="entry name" value="PRK00094.1-2"/>
    <property type="match status" value="1"/>
</dbReference>
<dbReference type="NCBIfam" id="NF000942">
    <property type="entry name" value="PRK00094.1-4"/>
    <property type="match status" value="1"/>
</dbReference>
<dbReference type="PANTHER" id="PTHR11728">
    <property type="entry name" value="GLYCEROL-3-PHOSPHATE DEHYDROGENASE"/>
    <property type="match status" value="1"/>
</dbReference>
<dbReference type="PANTHER" id="PTHR11728:SF1">
    <property type="entry name" value="GLYCEROL-3-PHOSPHATE DEHYDROGENASE [NAD(+)] 2, CHLOROPLASTIC"/>
    <property type="match status" value="1"/>
</dbReference>
<dbReference type="Pfam" id="PF07479">
    <property type="entry name" value="NAD_Gly3P_dh_C"/>
    <property type="match status" value="1"/>
</dbReference>
<dbReference type="Pfam" id="PF01210">
    <property type="entry name" value="NAD_Gly3P_dh_N"/>
    <property type="match status" value="1"/>
</dbReference>
<dbReference type="PIRSF" id="PIRSF000114">
    <property type="entry name" value="Glycerol-3-P_dh"/>
    <property type="match status" value="1"/>
</dbReference>
<dbReference type="PRINTS" id="PR00077">
    <property type="entry name" value="GPDHDRGNASE"/>
</dbReference>
<dbReference type="SUPFAM" id="SSF48179">
    <property type="entry name" value="6-phosphogluconate dehydrogenase C-terminal domain-like"/>
    <property type="match status" value="1"/>
</dbReference>
<dbReference type="SUPFAM" id="SSF51735">
    <property type="entry name" value="NAD(P)-binding Rossmann-fold domains"/>
    <property type="match status" value="1"/>
</dbReference>
<dbReference type="PROSITE" id="PS00957">
    <property type="entry name" value="NAD_G3PDH"/>
    <property type="match status" value="1"/>
</dbReference>
<reference key="1">
    <citation type="journal article" date="2006" name="Nat. Biotechnol.">
        <title>Genome sequence of the bioplastic-producing 'Knallgas' bacterium Ralstonia eutropha H16.</title>
        <authorList>
            <person name="Pohlmann A."/>
            <person name="Fricke W.F."/>
            <person name="Reinecke F."/>
            <person name="Kusian B."/>
            <person name="Liesegang H."/>
            <person name="Cramm R."/>
            <person name="Eitinger T."/>
            <person name="Ewering C."/>
            <person name="Poetter M."/>
            <person name="Schwartz E."/>
            <person name="Strittmatter A."/>
            <person name="Voss I."/>
            <person name="Gottschalk G."/>
            <person name="Steinbuechel A."/>
            <person name="Friedrich B."/>
            <person name="Bowien B."/>
        </authorList>
    </citation>
    <scope>NUCLEOTIDE SEQUENCE [LARGE SCALE GENOMIC DNA]</scope>
    <source>
        <strain>ATCC 17699 / DSM 428 / KCTC 22496 / NCIMB 10442 / H16 / Stanier 337</strain>
    </source>
</reference>